<keyword id="KW-1185">Reference proteome</keyword>
<keyword id="KW-0687">Ribonucleoprotein</keyword>
<keyword id="KW-0689">Ribosomal protein</keyword>
<protein>
    <recommendedName>
        <fullName evidence="1">Small ribosomal subunit protein uS2</fullName>
    </recommendedName>
    <alternativeName>
        <fullName evidence="2">30S ribosomal protein S2</fullName>
    </alternativeName>
</protein>
<gene>
    <name evidence="1" type="primary">rpsB</name>
    <name type="ordered locus">bll4861</name>
</gene>
<comment type="similarity">
    <text evidence="1">Belongs to the universal ribosomal protein uS2 family.</text>
</comment>
<accession>Q89KP3</accession>
<name>RS2_BRADU</name>
<evidence type="ECO:0000255" key="1">
    <source>
        <dbReference type="HAMAP-Rule" id="MF_00291"/>
    </source>
</evidence>
<evidence type="ECO:0000305" key="2"/>
<sequence length="331" mass="35733">MALPDFTMRQLLEAGVHFGHQSHRWNPKMAPFIFGTRNNIHIVDLAQTVPMLHHALQAVSDTVAKGGRILFVGTKRQAQDGVADAAKRCAQYFVNSRWLGGTLTNWKTISASIKRLRHLDDVLAGGEANSYTKKERLTLQRERDKLDRSLGGIKDMGGLPDLIFVIDTNKEDIAIQEAQRLNIPVAAIVDTNSDPKGITYVVPGNDDAGRAISLYCDLIARAAIDGISRAQGDSGIDIGASARPLAEELPAASSSGFQGLAGPRGTADDLKKLPGVSGAIEKKFNDLGIFHFWQLAELDHDTAHTIGEEVGLPSRADAWVAKAKALTAEAE</sequence>
<organism>
    <name type="scientific">Bradyrhizobium diazoefficiens (strain JCM 10833 / BCRC 13528 / IAM 13628 / NBRC 14792 / USDA 110)</name>
    <dbReference type="NCBI Taxonomy" id="224911"/>
    <lineage>
        <taxon>Bacteria</taxon>
        <taxon>Pseudomonadati</taxon>
        <taxon>Pseudomonadota</taxon>
        <taxon>Alphaproteobacteria</taxon>
        <taxon>Hyphomicrobiales</taxon>
        <taxon>Nitrobacteraceae</taxon>
        <taxon>Bradyrhizobium</taxon>
    </lineage>
</organism>
<reference key="1">
    <citation type="journal article" date="2002" name="DNA Res.">
        <title>Complete genomic sequence of nitrogen-fixing symbiotic bacterium Bradyrhizobium japonicum USDA110.</title>
        <authorList>
            <person name="Kaneko T."/>
            <person name="Nakamura Y."/>
            <person name="Sato S."/>
            <person name="Minamisawa K."/>
            <person name="Uchiumi T."/>
            <person name="Sasamoto S."/>
            <person name="Watanabe A."/>
            <person name="Idesawa K."/>
            <person name="Iriguchi M."/>
            <person name="Kawashima K."/>
            <person name="Kohara M."/>
            <person name="Matsumoto M."/>
            <person name="Shimpo S."/>
            <person name="Tsuruoka H."/>
            <person name="Wada T."/>
            <person name="Yamada M."/>
            <person name="Tabata S."/>
        </authorList>
    </citation>
    <scope>NUCLEOTIDE SEQUENCE [LARGE SCALE GENOMIC DNA]</scope>
    <source>
        <strain>JCM 10833 / BCRC 13528 / IAM 13628 / NBRC 14792 / USDA 110</strain>
    </source>
</reference>
<dbReference type="EMBL" id="BA000040">
    <property type="protein sequence ID" value="BAC50126.1"/>
    <property type="molecule type" value="Genomic_DNA"/>
</dbReference>
<dbReference type="RefSeq" id="NP_771501.1">
    <property type="nucleotide sequence ID" value="NC_004463.1"/>
</dbReference>
<dbReference type="RefSeq" id="WP_011087629.1">
    <property type="nucleotide sequence ID" value="NC_004463.1"/>
</dbReference>
<dbReference type="SMR" id="Q89KP3"/>
<dbReference type="FunCoup" id="Q89KP3">
    <property type="interactions" value="949"/>
</dbReference>
<dbReference type="STRING" id="224911.AAV28_21615"/>
<dbReference type="EnsemblBacteria" id="BAC50126">
    <property type="protein sequence ID" value="BAC50126"/>
    <property type="gene ID" value="BAC50126"/>
</dbReference>
<dbReference type="GeneID" id="46491864"/>
<dbReference type="KEGG" id="bja:bll4861"/>
<dbReference type="PATRIC" id="fig|224911.44.peg.4706"/>
<dbReference type="eggNOG" id="COG0052">
    <property type="taxonomic scope" value="Bacteria"/>
</dbReference>
<dbReference type="HOGENOM" id="CLU_040318_2_1_5"/>
<dbReference type="InParanoid" id="Q89KP3"/>
<dbReference type="OrthoDB" id="9808036at2"/>
<dbReference type="PhylomeDB" id="Q89KP3"/>
<dbReference type="Proteomes" id="UP000002526">
    <property type="component" value="Chromosome"/>
</dbReference>
<dbReference type="GO" id="GO:0022627">
    <property type="term" value="C:cytosolic small ribosomal subunit"/>
    <property type="evidence" value="ECO:0000318"/>
    <property type="project" value="GO_Central"/>
</dbReference>
<dbReference type="GO" id="GO:0003735">
    <property type="term" value="F:structural constituent of ribosome"/>
    <property type="evidence" value="ECO:0000318"/>
    <property type="project" value="GO_Central"/>
</dbReference>
<dbReference type="GO" id="GO:0006412">
    <property type="term" value="P:translation"/>
    <property type="evidence" value="ECO:0007669"/>
    <property type="project" value="UniProtKB-UniRule"/>
</dbReference>
<dbReference type="CDD" id="cd01425">
    <property type="entry name" value="RPS2"/>
    <property type="match status" value="1"/>
</dbReference>
<dbReference type="FunFam" id="1.10.287.610:FF:000004">
    <property type="entry name" value="30S ribosomal protein S2"/>
    <property type="match status" value="1"/>
</dbReference>
<dbReference type="Gene3D" id="3.40.50.10490">
    <property type="entry name" value="Glucose-6-phosphate isomerase like protein, domain 1"/>
    <property type="match status" value="1"/>
</dbReference>
<dbReference type="Gene3D" id="1.10.287.610">
    <property type="entry name" value="Helix hairpin bin"/>
    <property type="match status" value="1"/>
</dbReference>
<dbReference type="HAMAP" id="MF_00291_B">
    <property type="entry name" value="Ribosomal_uS2_B"/>
    <property type="match status" value="1"/>
</dbReference>
<dbReference type="InterPro" id="IPR001865">
    <property type="entry name" value="Ribosomal_uS2"/>
</dbReference>
<dbReference type="InterPro" id="IPR005706">
    <property type="entry name" value="Ribosomal_uS2_bac/mit/plastid"/>
</dbReference>
<dbReference type="InterPro" id="IPR018130">
    <property type="entry name" value="Ribosomal_uS2_CS"/>
</dbReference>
<dbReference type="InterPro" id="IPR023591">
    <property type="entry name" value="Ribosomal_uS2_flav_dom_sf"/>
</dbReference>
<dbReference type="NCBIfam" id="NF008966">
    <property type="entry name" value="PRK12311.1"/>
    <property type="match status" value="1"/>
</dbReference>
<dbReference type="NCBIfam" id="TIGR01011">
    <property type="entry name" value="rpsB_bact"/>
    <property type="match status" value="1"/>
</dbReference>
<dbReference type="PANTHER" id="PTHR12534">
    <property type="entry name" value="30S RIBOSOMAL PROTEIN S2 PROKARYOTIC AND ORGANELLAR"/>
    <property type="match status" value="1"/>
</dbReference>
<dbReference type="PANTHER" id="PTHR12534:SF0">
    <property type="entry name" value="SMALL RIBOSOMAL SUBUNIT PROTEIN US2M"/>
    <property type="match status" value="1"/>
</dbReference>
<dbReference type="Pfam" id="PF00318">
    <property type="entry name" value="Ribosomal_S2"/>
    <property type="match status" value="1"/>
</dbReference>
<dbReference type="PRINTS" id="PR00395">
    <property type="entry name" value="RIBOSOMALS2"/>
</dbReference>
<dbReference type="SUPFAM" id="SSF52313">
    <property type="entry name" value="Ribosomal protein S2"/>
    <property type="match status" value="1"/>
</dbReference>
<dbReference type="PROSITE" id="PS00962">
    <property type="entry name" value="RIBOSOMAL_S2_1"/>
    <property type="match status" value="1"/>
</dbReference>
<dbReference type="PROSITE" id="PS00963">
    <property type="entry name" value="RIBOSOMAL_S2_2"/>
    <property type="match status" value="1"/>
</dbReference>
<proteinExistence type="inferred from homology"/>
<feature type="chain" id="PRO_1000003900" description="Small ribosomal subunit protein uS2">
    <location>
        <begin position="1"/>
        <end position="331"/>
    </location>
</feature>